<dbReference type="EC" id="3.1.1.96" evidence="1"/>
<dbReference type="EMBL" id="CP001100">
    <property type="protein sequence ID" value="ACF14306.1"/>
    <property type="molecule type" value="Genomic_DNA"/>
</dbReference>
<dbReference type="RefSeq" id="WP_012500390.1">
    <property type="nucleotide sequence ID" value="NC_011026.1"/>
</dbReference>
<dbReference type="SMR" id="B3QTV8"/>
<dbReference type="STRING" id="517418.Ctha_1849"/>
<dbReference type="KEGG" id="cts:Ctha_1849"/>
<dbReference type="eggNOG" id="COG1490">
    <property type="taxonomic scope" value="Bacteria"/>
</dbReference>
<dbReference type="HOGENOM" id="CLU_076901_1_0_10"/>
<dbReference type="OrthoDB" id="9801395at2"/>
<dbReference type="Proteomes" id="UP000001208">
    <property type="component" value="Chromosome"/>
</dbReference>
<dbReference type="GO" id="GO:0005737">
    <property type="term" value="C:cytoplasm"/>
    <property type="evidence" value="ECO:0007669"/>
    <property type="project" value="UniProtKB-SubCell"/>
</dbReference>
<dbReference type="GO" id="GO:0051500">
    <property type="term" value="F:D-tyrosyl-tRNA(Tyr) deacylase activity"/>
    <property type="evidence" value="ECO:0007669"/>
    <property type="project" value="TreeGrafter"/>
</dbReference>
<dbReference type="GO" id="GO:0106026">
    <property type="term" value="F:Gly-tRNA(Ala) deacylase activity"/>
    <property type="evidence" value="ECO:0007669"/>
    <property type="project" value="UniProtKB-UniRule"/>
</dbReference>
<dbReference type="GO" id="GO:0043908">
    <property type="term" value="F:Ser(Gly)-tRNA(Ala) hydrolase activity"/>
    <property type="evidence" value="ECO:0007669"/>
    <property type="project" value="UniProtKB-UniRule"/>
</dbReference>
<dbReference type="GO" id="GO:0000049">
    <property type="term" value="F:tRNA binding"/>
    <property type="evidence" value="ECO:0007669"/>
    <property type="project" value="UniProtKB-UniRule"/>
</dbReference>
<dbReference type="GO" id="GO:0019478">
    <property type="term" value="P:D-amino acid catabolic process"/>
    <property type="evidence" value="ECO:0007669"/>
    <property type="project" value="UniProtKB-UniRule"/>
</dbReference>
<dbReference type="CDD" id="cd00563">
    <property type="entry name" value="Dtyr_deacylase"/>
    <property type="match status" value="1"/>
</dbReference>
<dbReference type="FunFam" id="3.50.80.10:FF:000001">
    <property type="entry name" value="D-aminoacyl-tRNA deacylase"/>
    <property type="match status" value="1"/>
</dbReference>
<dbReference type="Gene3D" id="3.50.80.10">
    <property type="entry name" value="D-tyrosyl-tRNA(Tyr) deacylase"/>
    <property type="match status" value="1"/>
</dbReference>
<dbReference type="HAMAP" id="MF_00518">
    <property type="entry name" value="Deacylase_Dtd"/>
    <property type="match status" value="1"/>
</dbReference>
<dbReference type="InterPro" id="IPR003732">
    <property type="entry name" value="Daa-tRNA_deacyls_DTD"/>
</dbReference>
<dbReference type="InterPro" id="IPR023509">
    <property type="entry name" value="DTD-like_sf"/>
</dbReference>
<dbReference type="NCBIfam" id="TIGR00256">
    <property type="entry name" value="D-aminoacyl-tRNA deacylase"/>
    <property type="match status" value="1"/>
</dbReference>
<dbReference type="PANTHER" id="PTHR10472:SF5">
    <property type="entry name" value="D-AMINOACYL-TRNA DEACYLASE 1"/>
    <property type="match status" value="1"/>
</dbReference>
<dbReference type="PANTHER" id="PTHR10472">
    <property type="entry name" value="D-TYROSYL-TRNA TYR DEACYLASE"/>
    <property type="match status" value="1"/>
</dbReference>
<dbReference type="Pfam" id="PF02580">
    <property type="entry name" value="Tyr_Deacylase"/>
    <property type="match status" value="1"/>
</dbReference>
<dbReference type="SUPFAM" id="SSF69500">
    <property type="entry name" value="DTD-like"/>
    <property type="match status" value="1"/>
</dbReference>
<reference key="1">
    <citation type="submission" date="2008-06" db="EMBL/GenBank/DDBJ databases">
        <title>Complete sequence of Chloroherpeton thalassium ATCC 35110.</title>
        <authorList>
            <consortium name="US DOE Joint Genome Institute"/>
            <person name="Lucas S."/>
            <person name="Copeland A."/>
            <person name="Lapidus A."/>
            <person name="Glavina del Rio T."/>
            <person name="Dalin E."/>
            <person name="Tice H."/>
            <person name="Bruce D."/>
            <person name="Goodwin L."/>
            <person name="Pitluck S."/>
            <person name="Schmutz J."/>
            <person name="Larimer F."/>
            <person name="Land M."/>
            <person name="Hauser L."/>
            <person name="Kyrpides N."/>
            <person name="Mikhailova N."/>
            <person name="Liu Z."/>
            <person name="Li T."/>
            <person name="Zhao F."/>
            <person name="Overmann J."/>
            <person name="Bryant D.A."/>
            <person name="Richardson P."/>
        </authorList>
    </citation>
    <scope>NUCLEOTIDE SEQUENCE [LARGE SCALE GENOMIC DNA]</scope>
    <source>
        <strain>ATCC 35110 / GB-78</strain>
    </source>
</reference>
<proteinExistence type="inferred from homology"/>
<gene>
    <name evidence="1" type="primary">dtd</name>
    <name type="ordered locus">Ctha_1849</name>
</gene>
<sequence length="152" mass="16681">MRVLVQRVAHASVVVAGETIGKISRGLLLLVGVTHTDSQNDLEWMAKKILKLRIFEDDEGKMNRSVEDVGGAILAVSQFTLYGDARKGNRPSFLEAARPEQAQASYQDFVKMLKLLGSVPVETGQFAAHMEVSLLNDGPVTLMLESPTKEEK</sequence>
<name>DTD_CHLT3</name>
<protein>
    <recommendedName>
        <fullName evidence="1">D-aminoacyl-tRNA deacylase</fullName>
        <shortName evidence="1">DTD</shortName>
        <ecNumber evidence="1">3.1.1.96</ecNumber>
    </recommendedName>
    <alternativeName>
        <fullName evidence="1">Gly-tRNA(Ala) deacylase</fullName>
    </alternativeName>
</protein>
<feature type="chain" id="PRO_1000127506" description="D-aminoacyl-tRNA deacylase">
    <location>
        <begin position="1"/>
        <end position="152"/>
    </location>
</feature>
<feature type="short sequence motif" description="Gly-cisPro motif, important for rejection of L-amino acids" evidence="1">
    <location>
        <begin position="138"/>
        <end position="139"/>
    </location>
</feature>
<organism>
    <name type="scientific">Chloroherpeton thalassium (strain ATCC 35110 / GB-78)</name>
    <dbReference type="NCBI Taxonomy" id="517418"/>
    <lineage>
        <taxon>Bacteria</taxon>
        <taxon>Pseudomonadati</taxon>
        <taxon>Chlorobiota</taxon>
        <taxon>Chlorobiia</taxon>
        <taxon>Chlorobiales</taxon>
        <taxon>Chloroherpetonaceae</taxon>
        <taxon>Chloroherpeton</taxon>
    </lineage>
</organism>
<keyword id="KW-0963">Cytoplasm</keyword>
<keyword id="KW-0378">Hydrolase</keyword>
<keyword id="KW-1185">Reference proteome</keyword>
<keyword id="KW-0694">RNA-binding</keyword>
<keyword id="KW-0820">tRNA-binding</keyword>
<accession>B3QTV8</accession>
<evidence type="ECO:0000255" key="1">
    <source>
        <dbReference type="HAMAP-Rule" id="MF_00518"/>
    </source>
</evidence>
<comment type="function">
    <text evidence="1">An aminoacyl-tRNA editing enzyme that deacylates mischarged D-aminoacyl-tRNAs. Also deacylates mischarged glycyl-tRNA(Ala), protecting cells against glycine mischarging by AlaRS. Acts via tRNA-based rather than protein-based catalysis; rejects L-amino acids rather than detecting D-amino acids in the active site. By recycling D-aminoacyl-tRNA to D-amino acids and free tRNA molecules, this enzyme counteracts the toxicity associated with the formation of D-aminoacyl-tRNA entities in vivo and helps enforce protein L-homochirality.</text>
</comment>
<comment type="catalytic activity">
    <reaction evidence="1">
        <text>glycyl-tRNA(Ala) + H2O = tRNA(Ala) + glycine + H(+)</text>
        <dbReference type="Rhea" id="RHEA:53744"/>
        <dbReference type="Rhea" id="RHEA-COMP:9657"/>
        <dbReference type="Rhea" id="RHEA-COMP:13640"/>
        <dbReference type="ChEBI" id="CHEBI:15377"/>
        <dbReference type="ChEBI" id="CHEBI:15378"/>
        <dbReference type="ChEBI" id="CHEBI:57305"/>
        <dbReference type="ChEBI" id="CHEBI:78442"/>
        <dbReference type="ChEBI" id="CHEBI:78522"/>
        <dbReference type="EC" id="3.1.1.96"/>
    </reaction>
</comment>
<comment type="catalytic activity">
    <reaction evidence="1">
        <text>a D-aminoacyl-tRNA + H2O = a tRNA + a D-alpha-amino acid + H(+)</text>
        <dbReference type="Rhea" id="RHEA:13953"/>
        <dbReference type="Rhea" id="RHEA-COMP:10123"/>
        <dbReference type="Rhea" id="RHEA-COMP:10124"/>
        <dbReference type="ChEBI" id="CHEBI:15377"/>
        <dbReference type="ChEBI" id="CHEBI:15378"/>
        <dbReference type="ChEBI" id="CHEBI:59871"/>
        <dbReference type="ChEBI" id="CHEBI:78442"/>
        <dbReference type="ChEBI" id="CHEBI:79333"/>
        <dbReference type="EC" id="3.1.1.96"/>
    </reaction>
</comment>
<comment type="subunit">
    <text evidence="1">Homodimer.</text>
</comment>
<comment type="subcellular location">
    <subcellularLocation>
        <location evidence="1">Cytoplasm</location>
    </subcellularLocation>
</comment>
<comment type="domain">
    <text evidence="1">A Gly-cisPro motif from one monomer fits into the active site of the other monomer to allow specific chiral rejection of L-amino acids.</text>
</comment>
<comment type="similarity">
    <text evidence="1">Belongs to the DTD family.</text>
</comment>